<organism>
    <name type="scientific">Chlorobium luteolum (strain DSM 273 / BCRC 81028 / 2530)</name>
    <name type="common">Pelodictyon luteolum</name>
    <dbReference type="NCBI Taxonomy" id="319225"/>
    <lineage>
        <taxon>Bacteria</taxon>
        <taxon>Pseudomonadati</taxon>
        <taxon>Chlorobiota</taxon>
        <taxon>Chlorobiia</taxon>
        <taxon>Chlorobiales</taxon>
        <taxon>Chlorobiaceae</taxon>
        <taxon>Chlorobium/Pelodictyon group</taxon>
        <taxon>Pelodictyon</taxon>
    </lineage>
</organism>
<name>FMT_CHLL3</name>
<dbReference type="EC" id="2.1.2.9" evidence="1"/>
<dbReference type="EMBL" id="CP000096">
    <property type="protein sequence ID" value="ABB24331.1"/>
    <property type="molecule type" value="Genomic_DNA"/>
</dbReference>
<dbReference type="RefSeq" id="WP_011358203.1">
    <property type="nucleotide sequence ID" value="NC_007512.1"/>
</dbReference>
<dbReference type="SMR" id="Q3B2V0"/>
<dbReference type="STRING" id="319225.Plut_1472"/>
<dbReference type="KEGG" id="plt:Plut_1472"/>
<dbReference type="eggNOG" id="COG0223">
    <property type="taxonomic scope" value="Bacteria"/>
</dbReference>
<dbReference type="HOGENOM" id="CLU_033347_1_1_10"/>
<dbReference type="OrthoDB" id="9802815at2"/>
<dbReference type="Proteomes" id="UP000002709">
    <property type="component" value="Chromosome"/>
</dbReference>
<dbReference type="GO" id="GO:0005829">
    <property type="term" value="C:cytosol"/>
    <property type="evidence" value="ECO:0007669"/>
    <property type="project" value="TreeGrafter"/>
</dbReference>
<dbReference type="GO" id="GO:0004479">
    <property type="term" value="F:methionyl-tRNA formyltransferase activity"/>
    <property type="evidence" value="ECO:0007669"/>
    <property type="project" value="UniProtKB-UniRule"/>
</dbReference>
<dbReference type="CDD" id="cd08646">
    <property type="entry name" value="FMT_core_Met-tRNA-FMT_N"/>
    <property type="match status" value="1"/>
</dbReference>
<dbReference type="CDD" id="cd08704">
    <property type="entry name" value="Met_tRNA_FMT_C"/>
    <property type="match status" value="1"/>
</dbReference>
<dbReference type="Gene3D" id="3.40.50.12230">
    <property type="match status" value="1"/>
</dbReference>
<dbReference type="HAMAP" id="MF_00182">
    <property type="entry name" value="Formyl_trans"/>
    <property type="match status" value="1"/>
</dbReference>
<dbReference type="InterPro" id="IPR005794">
    <property type="entry name" value="Fmt"/>
</dbReference>
<dbReference type="InterPro" id="IPR005793">
    <property type="entry name" value="Formyl_trans_C"/>
</dbReference>
<dbReference type="InterPro" id="IPR002376">
    <property type="entry name" value="Formyl_transf_N"/>
</dbReference>
<dbReference type="InterPro" id="IPR036477">
    <property type="entry name" value="Formyl_transf_N_sf"/>
</dbReference>
<dbReference type="InterPro" id="IPR011034">
    <property type="entry name" value="Formyl_transferase-like_C_sf"/>
</dbReference>
<dbReference type="InterPro" id="IPR044135">
    <property type="entry name" value="Met-tRNA-FMT_C"/>
</dbReference>
<dbReference type="InterPro" id="IPR041711">
    <property type="entry name" value="Met-tRNA-FMT_N"/>
</dbReference>
<dbReference type="NCBIfam" id="TIGR00460">
    <property type="entry name" value="fmt"/>
    <property type="match status" value="1"/>
</dbReference>
<dbReference type="PANTHER" id="PTHR11138">
    <property type="entry name" value="METHIONYL-TRNA FORMYLTRANSFERASE"/>
    <property type="match status" value="1"/>
</dbReference>
<dbReference type="PANTHER" id="PTHR11138:SF5">
    <property type="entry name" value="METHIONYL-TRNA FORMYLTRANSFERASE, MITOCHONDRIAL"/>
    <property type="match status" value="1"/>
</dbReference>
<dbReference type="Pfam" id="PF02911">
    <property type="entry name" value="Formyl_trans_C"/>
    <property type="match status" value="1"/>
</dbReference>
<dbReference type="Pfam" id="PF00551">
    <property type="entry name" value="Formyl_trans_N"/>
    <property type="match status" value="1"/>
</dbReference>
<dbReference type="SUPFAM" id="SSF50486">
    <property type="entry name" value="FMT C-terminal domain-like"/>
    <property type="match status" value="1"/>
</dbReference>
<dbReference type="SUPFAM" id="SSF53328">
    <property type="entry name" value="Formyltransferase"/>
    <property type="match status" value="1"/>
</dbReference>
<protein>
    <recommendedName>
        <fullName evidence="1">Methionyl-tRNA formyltransferase</fullName>
        <ecNumber evidence="1">2.1.2.9</ecNumber>
    </recommendedName>
</protein>
<gene>
    <name evidence="1" type="primary">fmt</name>
    <name type="ordered locus">Plut_1472</name>
</gene>
<accession>Q3B2V0</accession>
<evidence type="ECO:0000255" key="1">
    <source>
        <dbReference type="HAMAP-Rule" id="MF_00182"/>
    </source>
</evidence>
<comment type="function">
    <text evidence="1">Attaches a formyl group to the free amino group of methionyl-tRNA(fMet). The formyl group appears to play a dual role in the initiator identity of N-formylmethionyl-tRNA by promoting its recognition by IF2 and preventing the misappropriation of this tRNA by the elongation apparatus.</text>
</comment>
<comment type="catalytic activity">
    <reaction evidence="1">
        <text>L-methionyl-tRNA(fMet) + (6R)-10-formyltetrahydrofolate = N-formyl-L-methionyl-tRNA(fMet) + (6S)-5,6,7,8-tetrahydrofolate + H(+)</text>
        <dbReference type="Rhea" id="RHEA:24380"/>
        <dbReference type="Rhea" id="RHEA-COMP:9952"/>
        <dbReference type="Rhea" id="RHEA-COMP:9953"/>
        <dbReference type="ChEBI" id="CHEBI:15378"/>
        <dbReference type="ChEBI" id="CHEBI:57453"/>
        <dbReference type="ChEBI" id="CHEBI:78530"/>
        <dbReference type="ChEBI" id="CHEBI:78844"/>
        <dbReference type="ChEBI" id="CHEBI:195366"/>
        <dbReference type="EC" id="2.1.2.9"/>
    </reaction>
</comment>
<comment type="similarity">
    <text evidence="1">Belongs to the Fmt family.</text>
</comment>
<reference key="1">
    <citation type="submission" date="2005-08" db="EMBL/GenBank/DDBJ databases">
        <title>Complete sequence of Pelodictyon luteolum DSM 273.</title>
        <authorList>
            <consortium name="US DOE Joint Genome Institute"/>
            <person name="Copeland A."/>
            <person name="Lucas S."/>
            <person name="Lapidus A."/>
            <person name="Barry K."/>
            <person name="Detter J.C."/>
            <person name="Glavina T."/>
            <person name="Hammon N."/>
            <person name="Israni S."/>
            <person name="Pitluck S."/>
            <person name="Bryant D."/>
            <person name="Schmutz J."/>
            <person name="Larimer F."/>
            <person name="Land M."/>
            <person name="Kyrpides N."/>
            <person name="Ivanova N."/>
            <person name="Richardson P."/>
        </authorList>
    </citation>
    <scope>NUCLEOTIDE SEQUENCE [LARGE SCALE GENOMIC DNA]</scope>
    <source>
        <strain>DSM 273 / BCRC 81028 / 2530</strain>
    </source>
</reference>
<feature type="chain" id="PRO_1000058403" description="Methionyl-tRNA formyltransferase">
    <location>
        <begin position="1"/>
        <end position="314"/>
    </location>
</feature>
<feature type="binding site" evidence="1">
    <location>
        <begin position="111"/>
        <end position="114"/>
    </location>
    <ligand>
        <name>(6S)-5,6,7,8-tetrahydrofolate</name>
        <dbReference type="ChEBI" id="CHEBI:57453"/>
    </ligand>
</feature>
<keyword id="KW-0648">Protein biosynthesis</keyword>
<keyword id="KW-1185">Reference proteome</keyword>
<keyword id="KW-0808">Transferase</keyword>
<proteinExistence type="inferred from homology"/>
<sequence length="314" mass="33928">MRILFMGTPEFAVPSLRAVAGAGPGFEVVMVVTGPDRPRRSRNSAPEPTPVKQAALELGLRVLEVEDVKDPAFASTVQELRPDVIVVAAFRILPPAVYGAARLGSFNLHASLLPAYRGAAPINHALMQGDRESGVTTFFLQQQVDTGNIILKRSTPVGSDENATELALRLSFIGAEAVLATLRLIAEGRADVSLQDESMASKAPKLTRQNTRIDWNRSAADLHNFIRGLSMRPAAWTTLGGKSVKIFRSAAAPQMSPSSPCAPGSLLIDDGRLYARGTDGWIELLLLQLEGKRPMEAPEFVRGFRPEVTEPQLV</sequence>